<sequence length="701" mass="77477">MATTHTLLSFDNLEFLLHRKDLTDLYGKRCGTLNLVINPYELFLPDELDDDCCDDPFNCCFSDVYASIGTEYSYIDPPDLIYEEHCATNGTWPDGTPCEPILPPFTITGTHHYYATKPGEVVSGILSKLRVFLGSLLRSTADVNSNFTFRAESDGPGSTEIVTEEQGTIVQQQPAPAPTALATLATASTGKSVEQEWMTFFSYHTSINWSTVESQGKVLYSQALNPSINPYLDHISKLYSTWSGGIDVRFTVSGSGVFGGKLAALLVPPGVEPIESVSMLQYPHVLFDARQTEPVIFTIPDIRKTLFHSMDETDTTKLVIMVYKNGADTKTTCSITVETRPSADFTFALLKPPGSLIKHGSIPSDLIPRNSAHWLGNRWWSMISGFSVQPRVFQSNRHFDFDSTTTGWSTPYYIPIEITITAKVKGNNHWYHVIAHDKALVPGIPDGWPDTTIPSEVHASNGNFDYAKGFHDDKEIVNPANNNTHFKGTYICGTLSTIKDPEKAENQSESQKKSSTMYVATADLGDNKVKPQHKISSQKLVVYFDGPEKDLTMNATLSPLGYTLVDDQPIGSNSSTVVRIATLPEAFTQGGNYPIFYVNKTNKGYFDKATTDCYNSQILMTSQRLAEGNYSLPPDSLAVYRITDSSSQWFDIGINHDGFSYVGLPDLPADLTFPLTSTFMGVQLARVKLASKVKVTRNSIK</sequence>
<feature type="chain" id="PRO_0000460240" description="Capsid protein VP1">
    <location>
        <begin position="1"/>
        <end position="701"/>
    </location>
</feature>
<feature type="chain" id="PRO_0000460241" description="Capsid leader protein">
    <location>
        <begin position="1"/>
        <end position="152"/>
    </location>
</feature>
<feature type="chain" id="PRO_0000402464" description="Mature capsid protein">
    <location>
        <begin position="153"/>
        <end position="701"/>
    </location>
</feature>
<feature type="site" description="Cleavage; by viral protease" evidence="2">
    <location>
        <begin position="152"/>
        <end position="153"/>
    </location>
</feature>
<reference key="1">
    <citation type="journal article" date="1998" name="Virus Res.">
        <title>The capsid protein of vesicular exanthema of swine virus serotype A48: relationship to the capsid protein of other animal caliciviruses.</title>
        <authorList>
            <person name="Neill J.D."/>
            <person name="Meyer R.F."/>
            <person name="Seal B.S."/>
        </authorList>
    </citation>
    <scope>NUCLEOTIDE SEQUENCE [GENOMIC RNA]</scope>
</reference>
<reference key="2">
    <citation type="submission" date="2000-08" db="EMBL/GenBank/DDBJ databases">
        <title>Complete nucleotide sequence of the genomic RNA of vesicular exanthema of swine virus A48.</title>
        <authorList>
            <person name="Neill J.D."/>
            <person name="Seal B.S."/>
            <person name="Ridpath J.F."/>
        </authorList>
    </citation>
    <scope>NUCLEOTIDE SEQUENCE [GENOMIC RNA]</scope>
</reference>
<keyword id="KW-0167">Capsid protein</keyword>
<keyword id="KW-1035">Host cytoplasm</keyword>
<keyword id="KW-1185">Reference proteome</keyword>
<keyword id="KW-1142">T=3 icosahedral capsid protein</keyword>
<keyword id="KW-0946">Virion</keyword>
<organism>
    <name type="scientific">Vesicular exanthema of swine virus serotype A48 (isolate Swine/United States/A48/1948)</name>
    <name type="common">VESV</name>
    <dbReference type="NCBI Taxonomy" id="85617"/>
    <lineage>
        <taxon>Viruses</taxon>
        <taxon>Riboviria</taxon>
        <taxon>Orthornavirae</taxon>
        <taxon>Pisuviricota</taxon>
        <taxon>Pisoniviricetes</taxon>
        <taxon>Picornavirales</taxon>
        <taxon>Caliciviridae</taxon>
        <taxon>Vesivirus</taxon>
        <taxon>Vesicular exanthema of swine virus</taxon>
    </lineage>
</organism>
<protein>
    <recommendedName>
        <fullName>Capsid protein VP1</fullName>
        <shortName>CP</shortName>
    </recommendedName>
    <alternativeName>
        <fullName>Capsid protein</fullName>
    </alternativeName>
    <alternativeName>
        <fullName>Coat protein</fullName>
    </alternativeName>
    <component>
        <recommendedName>
            <fullName evidence="2">Capsid leader protein</fullName>
            <shortName evidence="2">LC</shortName>
        </recommendedName>
    </component>
    <component>
        <recommendedName>
            <fullName>Mature capsid protein</fullName>
        </recommendedName>
    </component>
</protein>
<comment type="function">
    <text evidence="1">Capsid protein self assembles to form an icosahedral capsid with a T=3 symmetry, about 38 nm in diameter, and consisting of 180 capsid proteins. A smaller form of capsid with a diameter of 23 nm might be capsid proteins assembled as icosahedron with T=1 symmetry. The capsid encapsulates the genomic RNA and is decorated with VP2 proteins.</text>
</comment>
<comment type="subunit">
    <text evidence="1 3">Homodimer (By similarity). Homomultimer (By similarity). Interacts with the minor capsid protein VP2 (By similarity). May bind to VP3 and Vpg proteins.</text>
</comment>
<comment type="subcellular location">
    <molecule>Mature capsid protein</molecule>
    <subcellularLocation>
        <location evidence="2">Virion</location>
    </subcellularLocation>
    <subcellularLocation>
        <location>Host cytoplasm</location>
    </subcellularLocation>
</comment>
<comment type="PTM">
    <molecule>Capsid protein VP1</molecule>
    <text evidence="1">Cleaved by the viral protease to produce mature capsid protein.</text>
</comment>
<comment type="similarity">
    <text evidence="4">Belongs to the caliciviridae capsid protein family.</text>
</comment>
<evidence type="ECO:0000250" key="1">
    <source>
        <dbReference type="UniProtKB" id="P27406"/>
    </source>
</evidence>
<evidence type="ECO:0000250" key="2">
    <source>
        <dbReference type="UniProtKB" id="Q66915"/>
    </source>
</evidence>
<evidence type="ECO:0000250" key="3">
    <source>
        <dbReference type="UniProtKB" id="Q83884"/>
    </source>
</evidence>
<evidence type="ECO:0000305" key="4"/>
<accession>P89681</accession>
<name>CAPSD_VESVA</name>
<dbReference type="EMBL" id="U76874">
    <property type="protein sequence ID" value="AAC13889.2"/>
    <property type="molecule type" value="Genomic_RNA"/>
</dbReference>
<dbReference type="RefSeq" id="NP_066256.1">
    <property type="nucleotide sequence ID" value="NC_002551.1"/>
</dbReference>
<dbReference type="SMR" id="P89681"/>
<dbReference type="KEGG" id="vg:911832"/>
<dbReference type="Proteomes" id="UP000007661">
    <property type="component" value="Segment"/>
</dbReference>
<dbReference type="GO" id="GO:0030430">
    <property type="term" value="C:host cell cytoplasm"/>
    <property type="evidence" value="ECO:0007669"/>
    <property type="project" value="UniProtKB-SubCell"/>
</dbReference>
<dbReference type="GO" id="GO:0039617">
    <property type="term" value="C:T=3 icosahedral viral capsid"/>
    <property type="evidence" value="ECO:0007669"/>
    <property type="project" value="UniProtKB-KW"/>
</dbReference>
<dbReference type="CDD" id="cd00205">
    <property type="entry name" value="rhv_like"/>
    <property type="match status" value="1"/>
</dbReference>
<dbReference type="Gene3D" id="2.60.120.20">
    <property type="match status" value="1"/>
</dbReference>
<dbReference type="InterPro" id="IPR004005">
    <property type="entry name" value="Calicivirus_coat"/>
</dbReference>
<dbReference type="InterPro" id="IPR033703">
    <property type="entry name" value="Rhv-like"/>
</dbReference>
<dbReference type="InterPro" id="IPR029053">
    <property type="entry name" value="Viral_coat"/>
</dbReference>
<dbReference type="Pfam" id="PF00915">
    <property type="entry name" value="Calici_coat"/>
    <property type="match status" value="1"/>
</dbReference>
<dbReference type="SUPFAM" id="SSF88633">
    <property type="entry name" value="Positive stranded ssRNA viruses"/>
    <property type="match status" value="1"/>
</dbReference>
<organismHost>
    <name type="scientific">Sus scrofa</name>
    <name type="common">Pig</name>
    <dbReference type="NCBI Taxonomy" id="9823"/>
</organismHost>
<gene>
    <name type="ORF">ORF2</name>
</gene>
<proteinExistence type="inferred from homology"/>